<comment type="function">
    <text evidence="1">Dephosphorylates 2-hydroxy-3-keto-5-methylthiopentenyl-1-phosphate (HK-MTPenyl-1-P) yielding 1,2-dihydroxy-3-keto-5-methylthiopentene (DHK-MTPene).</text>
</comment>
<comment type="catalytic activity">
    <reaction evidence="1">
        <text>2-hydroxy-5-methylsulfanyl-3-oxopent-1-enyl phosphate + H2O = 1,2-dihydroxy-5-(methylsulfanyl)pent-1-en-3-one + phosphate</text>
        <dbReference type="Rhea" id="RHEA:14481"/>
        <dbReference type="ChEBI" id="CHEBI:15377"/>
        <dbReference type="ChEBI" id="CHEBI:43474"/>
        <dbReference type="ChEBI" id="CHEBI:49252"/>
        <dbReference type="ChEBI" id="CHEBI:59505"/>
        <dbReference type="EC" id="3.1.3.87"/>
    </reaction>
</comment>
<comment type="pathway">
    <text evidence="1">Amino-acid biosynthesis; L-methionine biosynthesis via salvage pathway; L-methionine from S-methyl-5-thio-alpha-D-ribose 1-phosphate: step 4/6.</text>
</comment>
<comment type="similarity">
    <text evidence="1">Belongs to the HAD-like hydrolase superfamily. MtnX family.</text>
</comment>
<gene>
    <name evidence="1" type="primary">mtnX</name>
    <name type="ordered locus">Bcer98_2736</name>
</gene>
<name>MTNX_BACCN</name>
<accession>A7GS61</accession>
<evidence type="ECO:0000255" key="1">
    <source>
        <dbReference type="HAMAP-Rule" id="MF_01680"/>
    </source>
</evidence>
<organism>
    <name type="scientific">Bacillus cytotoxicus (strain DSM 22905 / CIP 110041 / 391-98 / NVH 391-98)</name>
    <dbReference type="NCBI Taxonomy" id="315749"/>
    <lineage>
        <taxon>Bacteria</taxon>
        <taxon>Bacillati</taxon>
        <taxon>Bacillota</taxon>
        <taxon>Bacilli</taxon>
        <taxon>Bacillales</taxon>
        <taxon>Bacillaceae</taxon>
        <taxon>Bacillus</taxon>
        <taxon>Bacillus cereus group</taxon>
    </lineage>
</organism>
<proteinExistence type="inferred from homology"/>
<feature type="chain" id="PRO_0000357477" description="2-hydroxy-3-keto-5-methylthiopentenyl-1-phosphate phosphatase">
    <location>
        <begin position="1"/>
        <end position="219"/>
    </location>
</feature>
<sequence length="219" mass="25411">MSIQIFCDFDGTITNSDNITSIMEHFAPPKAEEIKKQILAQELSIQEGVEQLFHLLPTNLHDDMIAFLKNNASIRSGFQEFVQFINKNDLSFYVILGGMDFFVHPLLDGLVPKEKIYCNETDFSKEYIEVKWPYPCDKHCNHHCGLCKSTLIRRLSSQQDFRIVIGDSITDLQAAKQADKVFARDFLITKCKEYHIPYTPFHTFYDIQNELQHLVEVKL</sequence>
<protein>
    <recommendedName>
        <fullName evidence="1">2-hydroxy-3-keto-5-methylthiopentenyl-1-phosphate phosphatase</fullName>
        <shortName evidence="1">HK-MTPenyl-1-P phosphatase</shortName>
        <ecNumber evidence="1">3.1.3.87</ecNumber>
    </recommendedName>
</protein>
<reference key="1">
    <citation type="journal article" date="2008" name="Chem. Biol. Interact.">
        <title>Extending the Bacillus cereus group genomics to putative food-borne pathogens of different toxicity.</title>
        <authorList>
            <person name="Lapidus A."/>
            <person name="Goltsman E."/>
            <person name="Auger S."/>
            <person name="Galleron N."/>
            <person name="Segurens B."/>
            <person name="Dossat C."/>
            <person name="Land M.L."/>
            <person name="Broussolle V."/>
            <person name="Brillard J."/>
            <person name="Guinebretiere M.-H."/>
            <person name="Sanchis V."/>
            <person name="Nguen-the C."/>
            <person name="Lereclus D."/>
            <person name="Richardson P."/>
            <person name="Wincker P."/>
            <person name="Weissenbach J."/>
            <person name="Ehrlich S.D."/>
            <person name="Sorokin A."/>
        </authorList>
    </citation>
    <scope>NUCLEOTIDE SEQUENCE [LARGE SCALE GENOMIC DNA]</scope>
    <source>
        <strain>DSM 22905 / CIP 110041 / 391-98 / NVH 391-98</strain>
    </source>
</reference>
<keyword id="KW-0028">Amino-acid biosynthesis</keyword>
<keyword id="KW-0378">Hydrolase</keyword>
<keyword id="KW-0486">Methionine biosynthesis</keyword>
<dbReference type="EC" id="3.1.3.87" evidence="1"/>
<dbReference type="EMBL" id="CP000764">
    <property type="protein sequence ID" value="ABS22969.1"/>
    <property type="molecule type" value="Genomic_DNA"/>
</dbReference>
<dbReference type="RefSeq" id="WP_012095194.1">
    <property type="nucleotide sequence ID" value="NC_009674.1"/>
</dbReference>
<dbReference type="SMR" id="A7GS61"/>
<dbReference type="STRING" id="315749.Bcer98_2736"/>
<dbReference type="GeneID" id="33897990"/>
<dbReference type="KEGG" id="bcy:Bcer98_2736"/>
<dbReference type="eggNOG" id="COG4359">
    <property type="taxonomic scope" value="Bacteria"/>
</dbReference>
<dbReference type="HOGENOM" id="CLU_058495_2_1_9"/>
<dbReference type="OrthoDB" id="9804940at2"/>
<dbReference type="UniPathway" id="UPA00904">
    <property type="reaction ID" value="UER00877"/>
</dbReference>
<dbReference type="Proteomes" id="UP000002300">
    <property type="component" value="Chromosome"/>
</dbReference>
<dbReference type="GO" id="GO:0043716">
    <property type="term" value="F:2-hydroxy-3-keto-5-methylthiopentenyl-1-phosphate phosphatase activity"/>
    <property type="evidence" value="ECO:0007669"/>
    <property type="project" value="UniProtKB-UniRule"/>
</dbReference>
<dbReference type="GO" id="GO:0019509">
    <property type="term" value="P:L-methionine salvage from methylthioadenosine"/>
    <property type="evidence" value="ECO:0007669"/>
    <property type="project" value="UniProtKB-UniRule"/>
</dbReference>
<dbReference type="CDD" id="cd07524">
    <property type="entry name" value="HAD_Pase"/>
    <property type="match status" value="1"/>
</dbReference>
<dbReference type="Gene3D" id="3.90.1470.20">
    <property type="match status" value="1"/>
</dbReference>
<dbReference type="Gene3D" id="3.40.50.1000">
    <property type="entry name" value="HAD superfamily/HAD-like"/>
    <property type="match status" value="1"/>
</dbReference>
<dbReference type="HAMAP" id="MF_01680">
    <property type="entry name" value="Salvage_MtnX"/>
    <property type="match status" value="1"/>
</dbReference>
<dbReference type="InterPro" id="IPR050849">
    <property type="entry name" value="HAD-like_hydrolase_phosphatase"/>
</dbReference>
<dbReference type="InterPro" id="IPR036412">
    <property type="entry name" value="HAD-like_sf"/>
</dbReference>
<dbReference type="InterPro" id="IPR017718">
    <property type="entry name" value="HAD-SF_hydro_IB_MtnX"/>
</dbReference>
<dbReference type="InterPro" id="IPR006384">
    <property type="entry name" value="HAD_hydro_PyrdxlP_Pase-like"/>
</dbReference>
<dbReference type="InterPro" id="IPR023214">
    <property type="entry name" value="HAD_sf"/>
</dbReference>
<dbReference type="NCBIfam" id="TIGR01489">
    <property type="entry name" value="DKMTPPase-SF"/>
    <property type="match status" value="1"/>
</dbReference>
<dbReference type="NCBIfam" id="TIGR01488">
    <property type="entry name" value="HAD-SF-IB"/>
    <property type="match status" value="1"/>
</dbReference>
<dbReference type="NCBIfam" id="NF007103">
    <property type="entry name" value="PRK09552.1"/>
    <property type="match status" value="1"/>
</dbReference>
<dbReference type="NCBIfam" id="TIGR03333">
    <property type="entry name" value="salvage_mtnX"/>
    <property type="match status" value="1"/>
</dbReference>
<dbReference type="PANTHER" id="PTHR28181:SF2">
    <property type="entry name" value="PHOSPHORIC MONOESTER HYDROLASE"/>
    <property type="match status" value="1"/>
</dbReference>
<dbReference type="PANTHER" id="PTHR28181">
    <property type="entry name" value="UPF0655 PROTEIN YCR015C"/>
    <property type="match status" value="1"/>
</dbReference>
<dbReference type="Pfam" id="PF12710">
    <property type="entry name" value="HAD"/>
    <property type="match status" value="1"/>
</dbReference>
<dbReference type="SUPFAM" id="SSF56784">
    <property type="entry name" value="HAD-like"/>
    <property type="match status" value="1"/>
</dbReference>